<comment type="function">
    <text evidence="2 3 4">ATP-dependent protease that regulates sporulation (PubMed:36041628). Is able to bind and hydrolyze ATP (PubMed:36041628). This ATP-dependent protease activity is necessary for efficient sporulation of B.subtilis (PubMed:36041628). In vitro, can hydrolyze alpha-casein, an exogenous substrate of Lon proteases, in an ATP-dependent manner (PubMed:36041628). PrkA also modulates sporulation by negatively regulating the transcriptional regulator Hpr/ScoC to induce the expression of sigK (PubMed:25983726). The control of sporulation mediated via the Hpr/ScoC regulator is probably indirect (PubMed:36041628). PrkA was originally thought to be a protein kinase, as it has been shown to phosphorylate in vitro an unidentified 60 kDa protein from B.subtilis crude extracts at a serine residue (PubMed:8626065). However, Zhang et al. did not observe autophosphorylation or kinase activity for this protein, suggesting that it may have lost its kinase activity during evolution or may be a pseudokinase (PubMed:36041628).</text>
</comment>
<comment type="catalytic activity">
    <reaction evidence="3">
        <text>Hydrolysis of proteins in presence of ATP.</text>
        <dbReference type="EC" id="3.4.21.53"/>
    </reaction>
</comment>
<comment type="activity regulation">
    <text evidence="3 4">Hydrolase activity is regulated by phosphorylation by the Ser/Thr kinase PrkC, probably allowing fine control of sporulation (PubMed:36041628). Phosphorylation by PrkC does not prevent ATP fixation but it inhibits specifically PrkA protease activity and down-regulates the sporulation processes (PubMed:36041628). Hydrolase activity is inhibited by a protease inhibitor, phenylmethylsulfonyl fluoride (PMSF) (PubMed:36041628). Potential kinase activity requires the presence of MgCl(2) and is inhibited in the presence of MnCl(2) (PubMed:8626065).</text>
</comment>
<comment type="biophysicochemical properties">
    <kinetics>
        <KM evidence="3">0.53 mM for ATP</KM>
    </kinetics>
</comment>
<comment type="subcellular location">
    <subcellularLocation>
        <location evidence="1">Forespore</location>
    </subcellularLocation>
    <subcellularLocation>
        <location evidence="1">Spore coat</location>
    </subcellularLocation>
    <text evidence="1">Localizes in the inner layer of the spore coat (PubMed:12662922). Forms rings or cap-like structures around the forespore (PubMed:12662922).</text>
</comment>
<comment type="induction">
    <text evidence="1">Transcriptionally regulated by sigma-E.</text>
</comment>
<comment type="PTM">
    <text evidence="3">Phosphorylated by PrkC on two sites, Thr-217 and Ser-219, with the threonine being the major site of modification.</text>
</comment>
<comment type="disruption phenotype">
    <text evidence="1 2 3">Disruption of the gene results in decreased sporulation (PubMed:25983726, PubMed:36041628). The mutant exhibits defects in spore formation (PubMed:12662922). Disruption significantly reduces the expression of the transcriptional factor sigmaK and its downstream target genes (PubMed:25983726).</text>
</comment>
<comment type="similarity">
    <text evidence="7">Belongs to the PrkA family.</text>
</comment>
<proteinExistence type="evidence at protein level"/>
<feature type="chain" id="PRO_0000058575" description="ATP-dependent protease PrkA">
    <location>
        <begin position="1"/>
        <end position="631"/>
    </location>
</feature>
<feature type="modified residue" description="Phosphothreonine" evidence="3">
    <location>
        <position position="217"/>
    </location>
</feature>
<feature type="modified residue" description="Phosphoserine" evidence="3">
    <location>
        <position position="219"/>
    </location>
</feature>
<feature type="mutagenesis site" description="Strong decrease in ATP binding and protease activity. Shows a strong decrease in sporulation." evidence="3">
    <original>K</original>
    <variation>A</variation>
    <location>
        <position position="108"/>
    </location>
</feature>
<feature type="mutagenesis site" description="Does not affect sporulation." evidence="3">
    <original>T</original>
    <variation>A</variation>
    <location>
        <position position="217"/>
    </location>
</feature>
<feature type="mutagenesis site" description="Phospho-mimetic mutant. Is still able to bind ATP. Hydrolysis of alpha-casein is significantly less effective; when associated with Asp-219." evidence="3">
    <original>T</original>
    <variation>D</variation>
    <location>
        <position position="217"/>
    </location>
</feature>
<feature type="mutagenesis site" description="Lack of phosphorylation. Is still able to bind ATP. Strongly reduces sporulation rate." evidence="3">
    <original>T</original>
    <variation>E</variation>
    <location>
        <position position="217"/>
    </location>
</feature>
<feature type="mutagenesis site" description="Phospho-mimetic mutant. Is still able to bind ATP. Hydrolysis of alpha-casein is significantly less effective; when associated with Asp-217." evidence="3">
    <original>S</original>
    <variation>D</variation>
    <location>
        <position position="219"/>
    </location>
</feature>
<feature type="mutagenesis site" description="Partially phosphorylated. Is still able to bind ATP." evidence="3">
    <original>S</original>
    <variation>E</variation>
    <location>
        <position position="219"/>
    </location>
</feature>
<dbReference type="EC" id="3.4.21.53" evidence="3"/>
<dbReference type="EMBL" id="X79388">
    <property type="protein sequence ID" value="CAA55933.1"/>
    <property type="molecule type" value="Genomic_DNA"/>
</dbReference>
<dbReference type="EMBL" id="AL009126">
    <property type="protein sequence ID" value="CAB12725.1"/>
    <property type="molecule type" value="Genomic_DNA"/>
</dbReference>
<dbReference type="PIR" id="JC4602">
    <property type="entry name" value="JC4602"/>
</dbReference>
<dbReference type="RefSeq" id="NP_388778.1">
    <property type="nucleotide sequence ID" value="NC_000964.3"/>
</dbReference>
<dbReference type="RefSeq" id="WP_003233433.1">
    <property type="nucleotide sequence ID" value="NZ_OZ025638.1"/>
</dbReference>
<dbReference type="FunCoup" id="P39134">
    <property type="interactions" value="20"/>
</dbReference>
<dbReference type="STRING" id="224308.BSU08970"/>
<dbReference type="PaxDb" id="224308-BSU08970"/>
<dbReference type="DNASU" id="939250"/>
<dbReference type="EnsemblBacteria" id="CAB12725">
    <property type="protein sequence ID" value="CAB12725"/>
    <property type="gene ID" value="BSU_08970"/>
</dbReference>
<dbReference type="GeneID" id="939250"/>
<dbReference type="KEGG" id="bsu:BSU08970"/>
<dbReference type="PATRIC" id="fig|224308.179.peg.969"/>
<dbReference type="eggNOG" id="COG2766">
    <property type="taxonomic scope" value="Bacteria"/>
</dbReference>
<dbReference type="InParanoid" id="P39134"/>
<dbReference type="OrthoDB" id="9761914at2"/>
<dbReference type="PhylomeDB" id="P39134"/>
<dbReference type="BioCyc" id="BSUB:BSU08970-MONOMER"/>
<dbReference type="Proteomes" id="UP000001570">
    <property type="component" value="Chromosome"/>
</dbReference>
<dbReference type="GO" id="GO:0004672">
    <property type="term" value="F:protein kinase activity"/>
    <property type="evidence" value="ECO:0000318"/>
    <property type="project" value="GO_Central"/>
</dbReference>
<dbReference type="FunFam" id="3.40.50.300:FF:000602">
    <property type="entry name" value="Serine protein kinase PrkA"/>
    <property type="match status" value="1"/>
</dbReference>
<dbReference type="Gene3D" id="3.40.50.300">
    <property type="entry name" value="P-loop containing nucleotide triphosphate hydrolases"/>
    <property type="match status" value="1"/>
</dbReference>
<dbReference type="InterPro" id="IPR027417">
    <property type="entry name" value="P-loop_NTPase"/>
</dbReference>
<dbReference type="InterPro" id="IPR013153">
    <property type="entry name" value="Prk_AAA_dom"/>
</dbReference>
<dbReference type="InterPro" id="IPR010650">
    <property type="entry name" value="PrkA_C_dom"/>
</dbReference>
<dbReference type="InterPro" id="IPR016230">
    <property type="entry name" value="Ser_kinase_PrkA"/>
</dbReference>
<dbReference type="PANTHER" id="PTHR30267">
    <property type="entry name" value="PROTEIN KINASE PRKA"/>
    <property type="match status" value="1"/>
</dbReference>
<dbReference type="PANTHER" id="PTHR30267:SF2">
    <property type="entry name" value="PROTEIN PRKA"/>
    <property type="match status" value="1"/>
</dbReference>
<dbReference type="Pfam" id="PF08298">
    <property type="entry name" value="AAA_PrkA"/>
    <property type="match status" value="1"/>
</dbReference>
<dbReference type="Pfam" id="PF06798">
    <property type="entry name" value="PrkA"/>
    <property type="match status" value="1"/>
</dbReference>
<dbReference type="PIRSF" id="PIRSF000549">
    <property type="entry name" value="Ser_prot_kin"/>
    <property type="match status" value="1"/>
</dbReference>
<dbReference type="SMART" id="SM00763">
    <property type="entry name" value="AAA_PrkA"/>
    <property type="match status" value="1"/>
</dbReference>
<dbReference type="SUPFAM" id="SSF52540">
    <property type="entry name" value="P-loop containing nucleoside triphosphate hydrolases"/>
    <property type="match status" value="1"/>
</dbReference>
<gene>
    <name evidence="6" type="primary">prkA</name>
    <name type="ordered locus">BSU08970</name>
</gene>
<keyword id="KW-0067">ATP-binding</keyword>
<keyword id="KW-0378">Hydrolase</keyword>
<keyword id="KW-0547">Nucleotide-binding</keyword>
<keyword id="KW-0597">Phosphoprotein</keyword>
<keyword id="KW-0645">Protease</keyword>
<keyword id="KW-1185">Reference proteome</keyword>
<keyword id="KW-0749">Sporulation</keyword>
<accession>P39134</accession>
<reference key="1">
    <citation type="journal article" date="1996" name="Gene">
        <title>Cloning and characterization of the Bacillus subtilis prkA gene encoding a novel serine protein kinase.</title>
        <authorList>
            <person name="Fischer C."/>
            <person name="Geourjon C."/>
            <person name="Bourson C."/>
            <person name="Deutscher J."/>
        </authorList>
    </citation>
    <scope>NUCLEOTIDE SEQUENCE [GENOMIC DNA]</scope>
    <scope>PUTATIVE FUNCTION AS A SERINE KINASE</scope>
    <scope>ACTIVITY REGULATION</scope>
    <source>
        <strain>168</strain>
    </source>
</reference>
<reference key="2">
    <citation type="journal article" date="1997" name="Nature">
        <title>The complete genome sequence of the Gram-positive bacterium Bacillus subtilis.</title>
        <authorList>
            <person name="Kunst F."/>
            <person name="Ogasawara N."/>
            <person name="Moszer I."/>
            <person name="Albertini A.M."/>
            <person name="Alloni G."/>
            <person name="Azevedo V."/>
            <person name="Bertero M.G."/>
            <person name="Bessieres P."/>
            <person name="Bolotin A."/>
            <person name="Borchert S."/>
            <person name="Borriss R."/>
            <person name="Boursier L."/>
            <person name="Brans A."/>
            <person name="Braun M."/>
            <person name="Brignell S.C."/>
            <person name="Bron S."/>
            <person name="Brouillet S."/>
            <person name="Bruschi C.V."/>
            <person name="Caldwell B."/>
            <person name="Capuano V."/>
            <person name="Carter N.M."/>
            <person name="Choi S.-K."/>
            <person name="Codani J.-J."/>
            <person name="Connerton I.F."/>
            <person name="Cummings N.J."/>
            <person name="Daniel R.A."/>
            <person name="Denizot F."/>
            <person name="Devine K.M."/>
            <person name="Duesterhoeft A."/>
            <person name="Ehrlich S.D."/>
            <person name="Emmerson P.T."/>
            <person name="Entian K.-D."/>
            <person name="Errington J."/>
            <person name="Fabret C."/>
            <person name="Ferrari E."/>
            <person name="Foulger D."/>
            <person name="Fritz C."/>
            <person name="Fujita M."/>
            <person name="Fujita Y."/>
            <person name="Fuma S."/>
            <person name="Galizzi A."/>
            <person name="Galleron N."/>
            <person name="Ghim S.-Y."/>
            <person name="Glaser P."/>
            <person name="Goffeau A."/>
            <person name="Golightly E.J."/>
            <person name="Grandi G."/>
            <person name="Guiseppi G."/>
            <person name="Guy B.J."/>
            <person name="Haga K."/>
            <person name="Haiech J."/>
            <person name="Harwood C.R."/>
            <person name="Henaut A."/>
            <person name="Hilbert H."/>
            <person name="Holsappel S."/>
            <person name="Hosono S."/>
            <person name="Hullo M.-F."/>
            <person name="Itaya M."/>
            <person name="Jones L.-M."/>
            <person name="Joris B."/>
            <person name="Karamata D."/>
            <person name="Kasahara Y."/>
            <person name="Klaerr-Blanchard M."/>
            <person name="Klein C."/>
            <person name="Kobayashi Y."/>
            <person name="Koetter P."/>
            <person name="Koningstein G."/>
            <person name="Krogh S."/>
            <person name="Kumano M."/>
            <person name="Kurita K."/>
            <person name="Lapidus A."/>
            <person name="Lardinois S."/>
            <person name="Lauber J."/>
            <person name="Lazarevic V."/>
            <person name="Lee S.-M."/>
            <person name="Levine A."/>
            <person name="Liu H."/>
            <person name="Masuda S."/>
            <person name="Mauel C."/>
            <person name="Medigue C."/>
            <person name="Medina N."/>
            <person name="Mellado R.P."/>
            <person name="Mizuno M."/>
            <person name="Moestl D."/>
            <person name="Nakai S."/>
            <person name="Noback M."/>
            <person name="Noone D."/>
            <person name="O'Reilly M."/>
            <person name="Ogawa K."/>
            <person name="Ogiwara A."/>
            <person name="Oudega B."/>
            <person name="Park S.-H."/>
            <person name="Parro V."/>
            <person name="Pohl T.M."/>
            <person name="Portetelle D."/>
            <person name="Porwollik S."/>
            <person name="Prescott A.M."/>
            <person name="Presecan E."/>
            <person name="Pujic P."/>
            <person name="Purnelle B."/>
            <person name="Rapoport G."/>
            <person name="Rey M."/>
            <person name="Reynolds S."/>
            <person name="Rieger M."/>
            <person name="Rivolta C."/>
            <person name="Rocha E."/>
            <person name="Roche B."/>
            <person name="Rose M."/>
            <person name="Sadaie Y."/>
            <person name="Sato T."/>
            <person name="Scanlan E."/>
            <person name="Schleich S."/>
            <person name="Schroeter R."/>
            <person name="Scoffone F."/>
            <person name="Sekiguchi J."/>
            <person name="Sekowska A."/>
            <person name="Seror S.J."/>
            <person name="Serror P."/>
            <person name="Shin B.-S."/>
            <person name="Soldo B."/>
            <person name="Sorokin A."/>
            <person name="Tacconi E."/>
            <person name="Takagi T."/>
            <person name="Takahashi H."/>
            <person name="Takemaru K."/>
            <person name="Takeuchi M."/>
            <person name="Tamakoshi A."/>
            <person name="Tanaka T."/>
            <person name="Terpstra P."/>
            <person name="Tognoni A."/>
            <person name="Tosato V."/>
            <person name="Uchiyama S."/>
            <person name="Vandenbol M."/>
            <person name="Vannier F."/>
            <person name="Vassarotti A."/>
            <person name="Viari A."/>
            <person name="Wambutt R."/>
            <person name="Wedler E."/>
            <person name="Wedler H."/>
            <person name="Weitzenegger T."/>
            <person name="Winters P."/>
            <person name="Wipat A."/>
            <person name="Yamamoto H."/>
            <person name="Yamane K."/>
            <person name="Yasumoto K."/>
            <person name="Yata K."/>
            <person name="Yoshida K."/>
            <person name="Yoshikawa H.-F."/>
            <person name="Zumstein E."/>
            <person name="Yoshikawa H."/>
            <person name="Danchin A."/>
        </authorList>
    </citation>
    <scope>NUCLEOTIDE SEQUENCE [LARGE SCALE GENOMIC DNA]</scope>
    <source>
        <strain>168</strain>
    </source>
</reference>
<reference key="3">
    <citation type="journal article" date="2003" name="J. Mol. Biol.">
        <title>The sigmaE regulon and the identification of additional sporulation genes in Bacillus subtilis.</title>
        <authorList>
            <person name="Eichenberger P."/>
            <person name="Jensen S.T."/>
            <person name="Conlon E.M."/>
            <person name="van Ooij C."/>
            <person name="Silvaggi J."/>
            <person name="Gonzalez-Pastor J.-E."/>
            <person name="Fujita M."/>
            <person name="Ben-Yehuda S."/>
            <person name="Stragier P."/>
            <person name="Liu J.S."/>
            <person name="Losick R."/>
        </authorList>
    </citation>
    <scope>SUBCELLULAR LOCATION</scope>
    <scope>INDUCTION</scope>
    <scope>DISRUPTION PHENOTYPE</scope>
</reference>
<reference key="4">
    <citation type="journal article" date="2015" name="Front. Microbiol.">
        <title>Eukaryote-like Ser/Thr protein kinase PrkA modulates sporulation via regulating the transcriptional factor sigma(K) in Bacillus subtilis.</title>
        <authorList>
            <person name="Yan J."/>
            <person name="Zou W."/>
            <person name="Fang J."/>
            <person name="Huang X."/>
            <person name="Gao F."/>
            <person name="He Z."/>
            <person name="Zhang K."/>
            <person name="Zhao N."/>
        </authorList>
    </citation>
    <scope>FUNCTION IN SPORULATION</scope>
    <scope>DISRUPTION PHENOTYPE</scope>
    <source>
        <strain>168</strain>
    </source>
</reference>
<reference key="5">
    <citation type="journal article" date="2022" name="J. Biol. Chem.">
        <title>PrkA is an ATP-dependent protease that regulates sporulation in Bacillus subtilis.</title>
        <authorList>
            <person name="Zhang A."/>
            <person name="Lebrun R."/>
            <person name="Espinosa L."/>
            <person name="Galinier A."/>
            <person name="Pompeo F."/>
        </authorList>
    </citation>
    <scope>FUNCTION AS A PROTEASE</scope>
    <scope>CATALYTIC ACTIVITY</scope>
    <scope>ACTIVITY REGULATION</scope>
    <scope>BIOPHYSICOCHEMICAL PROPERTIES</scope>
    <scope>DISRUPTION PHENOTYPE</scope>
    <scope>PHOSPHORYLATION AT THR-217 AND SER-219</scope>
    <scope>MUTAGENESIS OF LYS-108; THR-217 AND SER-219</scope>
    <source>
        <strain>168</strain>
    </source>
</reference>
<sequence length="631" mass="72888">MDILKKIEKYREEEQRLKWEGTFADYLEIIKENPMVAQSAHSRVFNMIKDSGIEEIDGRKKYSFFDRELFGLEESLERLVEEYFHPAAKRLDVRKRILLLMGPVSGGKSTLVTMLKKGLEAYTLTDNGAVYAIKGCPMHEDPLHLIPHHLRDDFYREYGIRIEGSLSPLNVMRLEEEYGGRIEDVKVERIFFSEDKRTGIGTFSPSDPKSQDIADLTGSIDFSTIAEYGSESDPRAYRFDGELNKANRGMMEFQEMLKCDEKFLWHLLSLTQEGNFKAGRFALISADELIVAHTNETEYRSFISNKKNEALHSRIIVMPVPYNLKVSEEERIYEKMIAESDVADVHIAPHTLKVAAMFSILTRLKEPKRSDIDLVKKMRLYDGESVEGYNSVDVEDMKKEYNDEGMSGIDPRYVINRISSTIIRKNMESINSLDVLRSLKEGLDQHPSISSEDRERYLNFISAARKEYDDIAKKEVQKAFVYSYEESAKTLMDNYLDNVEAYCNKNKLRDPLTGEEMNPDEKLMRSIEEQIGISENAKKAFREEILIRISAYARKGKRFDYNSHERLREAIQKKLFADLKDVVKITTSTKTPDEQQLKKVNEVVARLIDEHGYNSTSANELLKYVGSLLNR</sequence>
<evidence type="ECO:0000269" key="1">
    <source>
    </source>
</evidence>
<evidence type="ECO:0000269" key="2">
    <source>
    </source>
</evidence>
<evidence type="ECO:0000269" key="3">
    <source>
    </source>
</evidence>
<evidence type="ECO:0000269" key="4">
    <source>
    </source>
</evidence>
<evidence type="ECO:0000303" key="5">
    <source>
    </source>
</evidence>
<evidence type="ECO:0000303" key="6">
    <source>
    </source>
</evidence>
<evidence type="ECO:0000305" key="7"/>
<name>PRKA_BACSU</name>
<organism>
    <name type="scientific">Bacillus subtilis (strain 168)</name>
    <dbReference type="NCBI Taxonomy" id="224308"/>
    <lineage>
        <taxon>Bacteria</taxon>
        <taxon>Bacillati</taxon>
        <taxon>Bacillota</taxon>
        <taxon>Bacilli</taxon>
        <taxon>Bacillales</taxon>
        <taxon>Bacillaceae</taxon>
        <taxon>Bacillus</taxon>
    </lineage>
</organism>
<protein>
    <recommendedName>
        <fullName evidence="5">ATP-dependent protease PrkA</fullName>
        <ecNumber evidence="3">3.4.21.53</ecNumber>
    </recommendedName>
</protein>